<name>P2Y13_HUMAN</name>
<accession>Q9BPV8</accession>
<accession>B2R827</accession>
<accession>Q05C50</accession>
<accession>Q6DKN4</accession>
<accession>Q8IUT5</accession>
<accession>Q8TDU7</accession>
<accession>Q9BY61</accession>
<sequence length="354" mass="40789">MTAAIRRQRELSILPKVTLEAMNTTVMQGFNRSERCPRDTRIVQLVFPALYTVVFLTGILLNTLALWVFVHIPSSSTFIIYLKNTLVADLIMTLMLPFKILSDSHLAPWQLRAFVCRFSSVIFYETMYVGIVLLGLIAFDRFLKIIRPLRNIFLKKPVFAKTVSIFIWFFLFFISLPNTILSNKEATPSSVKKCASLKGPLGLKWHQMVNNICQFIFWTVFILMLVFYVVIAKKVYDSYRKSKSKDRKNNKKLEGKVFVVVAVFFVCFAPFHFARVPYTHSQTNNKTDCRLQNQLFIAKETTLFLAATNICMDPLIYIFLCKKFTEKLPCMQGRKTTASSQENHSSQTDNITLG</sequence>
<proteinExistence type="evidence at protein level"/>
<gene>
    <name type="primary">P2RY13</name>
    <name type="synonym">GPR86</name>
    <name type="synonym">GPR94</name>
    <name type="ORF">FKSG77</name>
</gene>
<feature type="chain" id="PRO_0000070040" description="P2Y purinoceptor 13">
    <location>
        <begin position="1"/>
        <end position="354"/>
    </location>
</feature>
<feature type="topological domain" description="Extracellular" evidence="1">
    <location>
        <begin position="1"/>
        <end position="49"/>
    </location>
</feature>
<feature type="transmembrane region" description="Helical; Name=1" evidence="1">
    <location>
        <begin position="50"/>
        <end position="70"/>
    </location>
</feature>
<feature type="topological domain" description="Cytoplasmic" evidence="1">
    <location>
        <begin position="71"/>
        <end position="77"/>
    </location>
</feature>
<feature type="transmembrane region" description="Helical; Name=2" evidence="1">
    <location>
        <begin position="78"/>
        <end position="98"/>
    </location>
</feature>
<feature type="topological domain" description="Extracellular" evidence="1">
    <location>
        <begin position="99"/>
        <end position="117"/>
    </location>
</feature>
<feature type="transmembrane region" description="Helical; Name=3" evidence="1">
    <location>
        <begin position="118"/>
        <end position="138"/>
    </location>
</feature>
<feature type="topological domain" description="Cytoplasmic" evidence="1">
    <location>
        <begin position="139"/>
        <end position="161"/>
    </location>
</feature>
<feature type="transmembrane region" description="Helical; Name=4" evidence="1">
    <location>
        <begin position="162"/>
        <end position="182"/>
    </location>
</feature>
<feature type="topological domain" description="Extracellular" evidence="1">
    <location>
        <begin position="183"/>
        <end position="211"/>
    </location>
</feature>
<feature type="transmembrane region" description="Helical; Name=5" evidence="1">
    <location>
        <begin position="212"/>
        <end position="232"/>
    </location>
</feature>
<feature type="topological domain" description="Cytoplasmic" evidence="1">
    <location>
        <begin position="233"/>
        <end position="252"/>
    </location>
</feature>
<feature type="transmembrane region" description="Helical; Name=6" evidence="1">
    <location>
        <begin position="253"/>
        <end position="273"/>
    </location>
</feature>
<feature type="topological domain" description="Extracellular" evidence="1">
    <location>
        <begin position="274"/>
        <end position="300"/>
    </location>
</feature>
<feature type="transmembrane region" description="Helical; Name=7" evidence="1">
    <location>
        <begin position="301"/>
        <end position="321"/>
    </location>
</feature>
<feature type="topological domain" description="Cytoplasmic" evidence="1">
    <location>
        <begin position="322"/>
        <end position="333"/>
    </location>
</feature>
<feature type="region of interest" description="Disordered" evidence="3">
    <location>
        <begin position="335"/>
        <end position="354"/>
    </location>
</feature>
<feature type="glycosylation site" description="N-linked (GlcNAc...) asparagine" evidence="1">
    <location>
        <position position="23"/>
    </location>
</feature>
<feature type="glycosylation site" description="N-linked (GlcNAc...) asparagine" evidence="1">
    <location>
        <position position="31"/>
    </location>
</feature>
<feature type="glycosylation site" description="N-linked (GlcNAc...) asparagine" evidence="1">
    <location>
        <position position="285"/>
    </location>
</feature>
<feature type="disulfide bond" evidence="2">
    <location>
        <begin position="116"/>
        <end position="194"/>
    </location>
</feature>
<feature type="splice variant" id="VSP_036226" description="In isoform 2." evidence="12 13 14">
    <location>
        <begin position="1"/>
        <end position="21"/>
    </location>
</feature>
<feature type="sequence variant" id="VAR_028299" description="In dbSNP:rs1466684." evidence="4 5 6 7 8 9 10 11">
    <original>T</original>
    <variation>M</variation>
    <location>
        <position position="179"/>
    </location>
</feature>
<dbReference type="EMBL" id="AF411113">
    <property type="protein sequence ID" value="AAL26484.1"/>
    <property type="molecule type" value="Genomic_DNA"/>
</dbReference>
<dbReference type="EMBL" id="AF406692">
    <property type="protein sequence ID" value="AAL01038.1"/>
    <property type="molecule type" value="mRNA"/>
</dbReference>
<dbReference type="EMBL" id="AF295368">
    <property type="protein sequence ID" value="AAK01864.1"/>
    <property type="molecule type" value="mRNA"/>
</dbReference>
<dbReference type="EMBL" id="AF345565">
    <property type="protein sequence ID" value="AAK29068.1"/>
    <property type="molecule type" value="mRNA"/>
</dbReference>
<dbReference type="EMBL" id="AB083597">
    <property type="protein sequence ID" value="BAB89310.1"/>
    <property type="molecule type" value="Genomic_DNA"/>
</dbReference>
<dbReference type="EMBL" id="AK313208">
    <property type="protein sequence ID" value="BAG36024.1"/>
    <property type="status" value="ALT_INIT"/>
    <property type="molecule type" value="mRNA"/>
</dbReference>
<dbReference type="EMBL" id="AC024886">
    <property type="status" value="NOT_ANNOTATED_CDS"/>
    <property type="molecule type" value="Genomic_DNA"/>
</dbReference>
<dbReference type="EMBL" id="CH471052">
    <property type="protein sequence ID" value="EAW78805.1"/>
    <property type="molecule type" value="Genomic_DNA"/>
</dbReference>
<dbReference type="EMBL" id="BC029363">
    <property type="protein sequence ID" value="AAH29363.1"/>
    <property type="status" value="ALT_SEQ"/>
    <property type="molecule type" value="mRNA"/>
</dbReference>
<dbReference type="EMBL" id="BC041116">
    <property type="protein sequence ID" value="AAH41116.2"/>
    <property type="status" value="ALT_INIT"/>
    <property type="molecule type" value="mRNA"/>
</dbReference>
<dbReference type="EMBL" id="BC066887">
    <property type="protein sequence ID" value="AAH66887.1"/>
    <property type="molecule type" value="mRNA"/>
</dbReference>
<dbReference type="EMBL" id="AF178982">
    <property type="protein sequence ID" value="AAK18752.1"/>
    <property type="molecule type" value="mRNA"/>
</dbReference>
<dbReference type="CCDS" id="CCDS3158.2">
    <molecule id="Q9BPV8-1"/>
</dbReference>
<dbReference type="RefSeq" id="NP_795713.2">
    <molecule id="Q9BPV8-1"/>
    <property type="nucleotide sequence ID" value="NM_176894.3"/>
</dbReference>
<dbReference type="SMR" id="Q9BPV8"/>
<dbReference type="BioGRID" id="119802">
    <property type="interactions" value="11"/>
</dbReference>
<dbReference type="FunCoup" id="Q9BPV8">
    <property type="interactions" value="801"/>
</dbReference>
<dbReference type="IntAct" id="Q9BPV8">
    <property type="interactions" value="1"/>
</dbReference>
<dbReference type="STRING" id="9606.ENSP00000320376"/>
<dbReference type="BindingDB" id="Q9BPV8"/>
<dbReference type="ChEMBL" id="CHEMBL3321651"/>
<dbReference type="DrugBank" id="DB01069">
    <property type="generic name" value="Promethazine"/>
</dbReference>
<dbReference type="DrugCentral" id="Q9BPV8"/>
<dbReference type="GuidetoPHARMACOLOGY" id="329"/>
<dbReference type="GlyCosmos" id="Q9BPV8">
    <property type="glycosylation" value="3 sites, No reported glycans"/>
</dbReference>
<dbReference type="GlyGen" id="Q9BPV8">
    <property type="glycosylation" value="3 sites, 1 N-linked glycan (1 site)"/>
</dbReference>
<dbReference type="iPTMnet" id="Q9BPV8"/>
<dbReference type="PhosphoSitePlus" id="Q9BPV8"/>
<dbReference type="BioMuta" id="P2RY13"/>
<dbReference type="DMDM" id="322510112"/>
<dbReference type="MassIVE" id="Q9BPV8"/>
<dbReference type="PaxDb" id="9606-ENSP00000320376"/>
<dbReference type="PeptideAtlas" id="Q9BPV8"/>
<dbReference type="ProteomicsDB" id="78575">
    <molecule id="Q9BPV8-1"/>
</dbReference>
<dbReference type="ProteomicsDB" id="78576">
    <molecule id="Q9BPV8-2"/>
</dbReference>
<dbReference type="Antibodypedia" id="33610">
    <property type="antibodies" value="373 antibodies from 30 providers"/>
</dbReference>
<dbReference type="DNASU" id="53829"/>
<dbReference type="Ensembl" id="ENST00000325602.6">
    <molecule id="Q9BPV8-1"/>
    <property type="protein sequence ID" value="ENSP00000320376.5"/>
    <property type="gene ID" value="ENSG00000181631.7"/>
</dbReference>
<dbReference type="GeneID" id="53829"/>
<dbReference type="KEGG" id="hsa:53829"/>
<dbReference type="MANE-Select" id="ENST00000325602.6">
    <property type="protein sequence ID" value="ENSP00000320376.5"/>
    <property type="RefSeq nucleotide sequence ID" value="NM_176894.3"/>
    <property type="RefSeq protein sequence ID" value="NP_795713.2"/>
</dbReference>
<dbReference type="UCSC" id="uc003eyv.3">
    <molecule id="Q9BPV8-1"/>
    <property type="organism name" value="human"/>
</dbReference>
<dbReference type="AGR" id="HGNC:4537"/>
<dbReference type="CTD" id="53829"/>
<dbReference type="DisGeNET" id="53829"/>
<dbReference type="GeneCards" id="P2RY13"/>
<dbReference type="HGNC" id="HGNC:4537">
    <property type="gene designation" value="P2RY13"/>
</dbReference>
<dbReference type="HPA" id="ENSG00000181631">
    <property type="expression patterns" value="Tissue enhanced (bone marrow, lymphoid tissue)"/>
</dbReference>
<dbReference type="MIM" id="606380">
    <property type="type" value="gene"/>
</dbReference>
<dbReference type="neXtProt" id="NX_Q9BPV8"/>
<dbReference type="OpenTargets" id="ENSG00000181631"/>
<dbReference type="VEuPathDB" id="HostDB:ENSG00000181631"/>
<dbReference type="eggNOG" id="ENOG502QUS2">
    <property type="taxonomic scope" value="Eukaryota"/>
</dbReference>
<dbReference type="GeneTree" id="ENSGT01110000267167"/>
<dbReference type="HOGENOM" id="CLU_009579_8_2_1"/>
<dbReference type="InParanoid" id="Q9BPV8"/>
<dbReference type="OMA" id="TERLPCM"/>
<dbReference type="OrthoDB" id="6163051at2759"/>
<dbReference type="PAN-GO" id="Q9BPV8">
    <property type="GO annotations" value="2 GO annotations based on evolutionary models"/>
</dbReference>
<dbReference type="PhylomeDB" id="Q9BPV8"/>
<dbReference type="TreeFam" id="TF330969"/>
<dbReference type="PathwayCommons" id="Q9BPV8"/>
<dbReference type="Reactome" id="R-HSA-417957">
    <property type="pathway name" value="P2Y receptors"/>
</dbReference>
<dbReference type="Reactome" id="R-HSA-418594">
    <property type="pathway name" value="G alpha (i) signalling events"/>
</dbReference>
<dbReference type="SignaLink" id="Q9BPV8"/>
<dbReference type="SIGNOR" id="Q9BPV8"/>
<dbReference type="BioGRID-ORCS" id="53829">
    <property type="hits" value="11 hits in 1140 CRISPR screens"/>
</dbReference>
<dbReference type="GeneWiki" id="P2RY13"/>
<dbReference type="GenomeRNAi" id="53829"/>
<dbReference type="Pharos" id="Q9BPV8">
    <property type="development level" value="Tchem"/>
</dbReference>
<dbReference type="PRO" id="PR:Q9BPV8"/>
<dbReference type="Proteomes" id="UP000005640">
    <property type="component" value="Chromosome 3"/>
</dbReference>
<dbReference type="RNAct" id="Q9BPV8">
    <property type="molecule type" value="protein"/>
</dbReference>
<dbReference type="Bgee" id="ENSG00000181631">
    <property type="expression patterns" value="Expressed in monocyte and 125 other cell types or tissues"/>
</dbReference>
<dbReference type="GO" id="GO:0005783">
    <property type="term" value="C:endoplasmic reticulum"/>
    <property type="evidence" value="ECO:0007669"/>
    <property type="project" value="Ensembl"/>
</dbReference>
<dbReference type="GO" id="GO:0005886">
    <property type="term" value="C:plasma membrane"/>
    <property type="evidence" value="ECO:0000304"/>
    <property type="project" value="Reactome"/>
</dbReference>
<dbReference type="GO" id="GO:0045028">
    <property type="term" value="F:G protein-coupled purinergic nucleotide receptor activity"/>
    <property type="evidence" value="ECO:0000318"/>
    <property type="project" value="GO_Central"/>
</dbReference>
<dbReference type="GO" id="GO:0007186">
    <property type="term" value="P:G protein-coupled receptor signaling pathway"/>
    <property type="evidence" value="ECO:0000318"/>
    <property type="project" value="GO_Central"/>
</dbReference>
<dbReference type="FunFam" id="1.20.1070.10:FF:000049">
    <property type="entry name" value="G-protein coupled receptor 87"/>
    <property type="match status" value="1"/>
</dbReference>
<dbReference type="Gene3D" id="1.20.1070.10">
    <property type="entry name" value="Rhodopsin 7-helix transmembrane proteins"/>
    <property type="match status" value="1"/>
</dbReference>
<dbReference type="InterPro" id="IPR000276">
    <property type="entry name" value="GPCR_Rhodpsn"/>
</dbReference>
<dbReference type="InterPro" id="IPR017452">
    <property type="entry name" value="GPCR_Rhodpsn_7TM"/>
</dbReference>
<dbReference type="InterPro" id="IPR008109">
    <property type="entry name" value="P2Y13_rcpt"/>
</dbReference>
<dbReference type="PANTHER" id="PTHR24233:SF10">
    <property type="entry name" value="P2Y PURINOCEPTOR 13"/>
    <property type="match status" value="1"/>
</dbReference>
<dbReference type="PANTHER" id="PTHR24233">
    <property type="entry name" value="P2Y PURINOCEPTOR-RELATED G-PROTEIN COUPLED RECEPTOR"/>
    <property type="match status" value="1"/>
</dbReference>
<dbReference type="Pfam" id="PF00001">
    <property type="entry name" value="7tm_1"/>
    <property type="match status" value="1"/>
</dbReference>
<dbReference type="PRINTS" id="PR00237">
    <property type="entry name" value="GPCRRHODOPSN"/>
</dbReference>
<dbReference type="PRINTS" id="PR01735">
    <property type="entry name" value="P2Y13PRNCPTR"/>
</dbReference>
<dbReference type="PRINTS" id="PR01157">
    <property type="entry name" value="P2YPURNOCPTR"/>
</dbReference>
<dbReference type="SUPFAM" id="SSF81321">
    <property type="entry name" value="Family A G protein-coupled receptor-like"/>
    <property type="match status" value="1"/>
</dbReference>
<dbReference type="PROSITE" id="PS00237">
    <property type="entry name" value="G_PROTEIN_RECEP_F1_1"/>
    <property type="match status" value="1"/>
</dbReference>
<dbReference type="PROSITE" id="PS50262">
    <property type="entry name" value="G_PROTEIN_RECEP_F1_2"/>
    <property type="match status" value="1"/>
</dbReference>
<reference key="1">
    <citation type="journal article" date="2001" name="Gene">
        <title>Discovery and mapping of ten novel G protein-coupled receptor genes.</title>
        <authorList>
            <person name="Lee D.K."/>
            <person name="Nguyen T."/>
            <person name="Lynch K.R."/>
            <person name="Cheng R."/>
            <person name="Vanti W.B."/>
            <person name="Arkhitko O."/>
            <person name="Lewis T."/>
            <person name="Evans J.F."/>
            <person name="George S.R."/>
            <person name="O'Dowd B.F."/>
        </authorList>
    </citation>
    <scope>NUCLEOTIDE SEQUENCE [GENOMIC DNA]</scope>
    <scope>ALTERNATIVE SPLICING (ISOFORM 2)</scope>
    <scope>VARIANT MET-179</scope>
</reference>
<reference key="2">
    <citation type="journal article" date="2001" name="J. Biol. Chem.">
        <title>Identification of a novel human ADP receptor coupled to Gi.</title>
        <authorList>
            <person name="Communi D."/>
            <person name="Gonzalez N.S."/>
            <person name="Detheux M."/>
            <person name="Brezillon S."/>
            <person name="Lannoy V."/>
            <person name="Parmentier M."/>
            <person name="Boeynaems J.-M."/>
        </authorList>
    </citation>
    <scope>NUCLEOTIDE SEQUENCE [MRNA] (ISOFORM 2)</scope>
    <scope>FUNCTION</scope>
    <scope>VARIANT MET-179</scope>
    <source>
        <tissue>Spleen</tissue>
    </source>
</reference>
<reference key="3">
    <citation type="journal article" date="2001" name="J. Mol. Biol.">
        <title>An expressed sequence tag (EST) data mining strategy succeeding in the discovery of new G-protein coupled receptors.</title>
        <authorList>
            <person name="Wittenberger T."/>
            <person name="Schaller H.C."/>
            <person name="Hellebrand S."/>
        </authorList>
    </citation>
    <scope>NUCLEOTIDE SEQUENCE [MRNA] (ISOFORM 2)</scope>
    <scope>VARIANT MET-179</scope>
    <source>
        <tissue>Amygdala</tissue>
        <tissue>Caudate nucleus</tissue>
        <tissue>Fetal brain</tissue>
        <tissue>Placenta</tissue>
    </source>
</reference>
<reference key="4">
    <citation type="submission" date="2001-02" db="EMBL/GenBank/DDBJ databases">
        <title>Molecular cloning of FKSG77, a novel gene encoding a putative G-protein-coupled receptor.</title>
        <authorList>
            <person name="Wang Y.-G."/>
            <person name="Gong L."/>
        </authorList>
    </citation>
    <scope>NUCLEOTIDE SEQUENCE [MRNA] (ISOFORM 2)</scope>
    <scope>VARIANT MET-179</scope>
    <source>
        <tissue>Heart</tissue>
    </source>
</reference>
<reference key="5">
    <citation type="journal article" date="2002" name="FEBS Lett.">
        <title>Identification of G protein-coupled receptor genes from the human genome sequence.</title>
        <authorList>
            <person name="Takeda S."/>
            <person name="Kadowaki S."/>
            <person name="Haga T."/>
            <person name="Takaesu H."/>
            <person name="Mitaku S."/>
        </authorList>
    </citation>
    <scope>NUCLEOTIDE SEQUENCE [LARGE SCALE GENOMIC DNA]</scope>
</reference>
<reference key="6">
    <citation type="journal article" date="2004" name="Nat. Genet.">
        <title>Complete sequencing and characterization of 21,243 full-length human cDNAs.</title>
        <authorList>
            <person name="Ota T."/>
            <person name="Suzuki Y."/>
            <person name="Nishikawa T."/>
            <person name="Otsuki T."/>
            <person name="Sugiyama T."/>
            <person name="Irie R."/>
            <person name="Wakamatsu A."/>
            <person name="Hayashi K."/>
            <person name="Sato H."/>
            <person name="Nagai K."/>
            <person name="Kimura K."/>
            <person name="Makita H."/>
            <person name="Sekine M."/>
            <person name="Obayashi M."/>
            <person name="Nishi T."/>
            <person name="Shibahara T."/>
            <person name="Tanaka T."/>
            <person name="Ishii S."/>
            <person name="Yamamoto J."/>
            <person name="Saito K."/>
            <person name="Kawai Y."/>
            <person name="Isono Y."/>
            <person name="Nakamura Y."/>
            <person name="Nagahari K."/>
            <person name="Murakami K."/>
            <person name="Yasuda T."/>
            <person name="Iwayanagi T."/>
            <person name="Wagatsuma M."/>
            <person name="Shiratori A."/>
            <person name="Sudo H."/>
            <person name="Hosoiri T."/>
            <person name="Kaku Y."/>
            <person name="Kodaira H."/>
            <person name="Kondo H."/>
            <person name="Sugawara M."/>
            <person name="Takahashi M."/>
            <person name="Kanda K."/>
            <person name="Yokoi T."/>
            <person name="Furuya T."/>
            <person name="Kikkawa E."/>
            <person name="Omura Y."/>
            <person name="Abe K."/>
            <person name="Kamihara K."/>
            <person name="Katsuta N."/>
            <person name="Sato K."/>
            <person name="Tanikawa M."/>
            <person name="Yamazaki M."/>
            <person name="Ninomiya K."/>
            <person name="Ishibashi T."/>
            <person name="Yamashita H."/>
            <person name="Murakawa K."/>
            <person name="Fujimori K."/>
            <person name="Tanai H."/>
            <person name="Kimata M."/>
            <person name="Watanabe M."/>
            <person name="Hiraoka S."/>
            <person name="Chiba Y."/>
            <person name="Ishida S."/>
            <person name="Ono Y."/>
            <person name="Takiguchi S."/>
            <person name="Watanabe S."/>
            <person name="Yosida M."/>
            <person name="Hotuta T."/>
            <person name="Kusano J."/>
            <person name="Kanehori K."/>
            <person name="Takahashi-Fujii A."/>
            <person name="Hara H."/>
            <person name="Tanase T.-O."/>
            <person name="Nomura Y."/>
            <person name="Togiya S."/>
            <person name="Komai F."/>
            <person name="Hara R."/>
            <person name="Takeuchi K."/>
            <person name="Arita M."/>
            <person name="Imose N."/>
            <person name="Musashino K."/>
            <person name="Yuuki H."/>
            <person name="Oshima A."/>
            <person name="Sasaki N."/>
            <person name="Aotsuka S."/>
            <person name="Yoshikawa Y."/>
            <person name="Matsunawa H."/>
            <person name="Ichihara T."/>
            <person name="Shiohata N."/>
            <person name="Sano S."/>
            <person name="Moriya S."/>
            <person name="Momiyama H."/>
            <person name="Satoh N."/>
            <person name="Takami S."/>
            <person name="Terashima Y."/>
            <person name="Suzuki O."/>
            <person name="Nakagawa S."/>
            <person name="Senoh A."/>
            <person name="Mizoguchi H."/>
            <person name="Goto Y."/>
            <person name="Shimizu F."/>
            <person name="Wakebe H."/>
            <person name="Hishigaki H."/>
            <person name="Watanabe T."/>
            <person name="Sugiyama A."/>
            <person name="Takemoto M."/>
            <person name="Kawakami B."/>
            <person name="Yamazaki M."/>
            <person name="Watanabe K."/>
            <person name="Kumagai A."/>
            <person name="Itakura S."/>
            <person name="Fukuzumi Y."/>
            <person name="Fujimori Y."/>
            <person name="Komiyama M."/>
            <person name="Tashiro H."/>
            <person name="Tanigami A."/>
            <person name="Fujiwara T."/>
            <person name="Ono T."/>
            <person name="Yamada K."/>
            <person name="Fujii Y."/>
            <person name="Ozaki K."/>
            <person name="Hirao M."/>
            <person name="Ohmori Y."/>
            <person name="Kawabata A."/>
            <person name="Hikiji T."/>
            <person name="Kobatake N."/>
            <person name="Inagaki H."/>
            <person name="Ikema Y."/>
            <person name="Okamoto S."/>
            <person name="Okitani R."/>
            <person name="Kawakami T."/>
            <person name="Noguchi S."/>
            <person name="Itoh T."/>
            <person name="Shigeta K."/>
            <person name="Senba T."/>
            <person name="Matsumura K."/>
            <person name="Nakajima Y."/>
            <person name="Mizuno T."/>
            <person name="Morinaga M."/>
            <person name="Sasaki M."/>
            <person name="Togashi T."/>
            <person name="Oyama M."/>
            <person name="Hata H."/>
            <person name="Watanabe M."/>
            <person name="Komatsu T."/>
            <person name="Mizushima-Sugano J."/>
            <person name="Satoh T."/>
            <person name="Shirai Y."/>
            <person name="Takahashi Y."/>
            <person name="Nakagawa K."/>
            <person name="Okumura K."/>
            <person name="Nagase T."/>
            <person name="Nomura N."/>
            <person name="Kikuchi H."/>
            <person name="Masuho Y."/>
            <person name="Yamashita R."/>
            <person name="Nakai K."/>
            <person name="Yada T."/>
            <person name="Nakamura Y."/>
            <person name="Ohara O."/>
            <person name="Isogai T."/>
            <person name="Sugano S."/>
        </authorList>
    </citation>
    <scope>NUCLEOTIDE SEQUENCE [LARGE SCALE MRNA] (ISOFORM 1)</scope>
    <scope>VARIANT MET-179</scope>
</reference>
<reference key="7">
    <citation type="journal article" date="2006" name="Nature">
        <title>The DNA sequence, annotation and analysis of human chromosome 3.</title>
        <authorList>
            <person name="Muzny D.M."/>
            <person name="Scherer S.E."/>
            <person name="Kaul R."/>
            <person name="Wang J."/>
            <person name="Yu J."/>
            <person name="Sudbrak R."/>
            <person name="Buhay C.J."/>
            <person name="Chen R."/>
            <person name="Cree A."/>
            <person name="Ding Y."/>
            <person name="Dugan-Rocha S."/>
            <person name="Gill R."/>
            <person name="Gunaratne P."/>
            <person name="Harris R.A."/>
            <person name="Hawes A.C."/>
            <person name="Hernandez J."/>
            <person name="Hodgson A.V."/>
            <person name="Hume J."/>
            <person name="Jackson A."/>
            <person name="Khan Z.M."/>
            <person name="Kovar-Smith C."/>
            <person name="Lewis L.R."/>
            <person name="Lozado R.J."/>
            <person name="Metzker M.L."/>
            <person name="Milosavljevic A."/>
            <person name="Miner G.R."/>
            <person name="Morgan M.B."/>
            <person name="Nazareth L.V."/>
            <person name="Scott G."/>
            <person name="Sodergren E."/>
            <person name="Song X.-Z."/>
            <person name="Steffen D."/>
            <person name="Wei S."/>
            <person name="Wheeler D.A."/>
            <person name="Wright M.W."/>
            <person name="Worley K.C."/>
            <person name="Yuan Y."/>
            <person name="Zhang Z."/>
            <person name="Adams C.Q."/>
            <person name="Ansari-Lari M.A."/>
            <person name="Ayele M."/>
            <person name="Brown M.J."/>
            <person name="Chen G."/>
            <person name="Chen Z."/>
            <person name="Clendenning J."/>
            <person name="Clerc-Blankenburg K.P."/>
            <person name="Chen R."/>
            <person name="Chen Z."/>
            <person name="Davis C."/>
            <person name="Delgado O."/>
            <person name="Dinh H.H."/>
            <person name="Dong W."/>
            <person name="Draper H."/>
            <person name="Ernst S."/>
            <person name="Fu G."/>
            <person name="Gonzalez-Garay M.L."/>
            <person name="Garcia D.K."/>
            <person name="Gillett W."/>
            <person name="Gu J."/>
            <person name="Hao B."/>
            <person name="Haugen E."/>
            <person name="Havlak P."/>
            <person name="He X."/>
            <person name="Hennig S."/>
            <person name="Hu S."/>
            <person name="Huang W."/>
            <person name="Jackson L.R."/>
            <person name="Jacob L.S."/>
            <person name="Kelly S.H."/>
            <person name="Kube M."/>
            <person name="Levy R."/>
            <person name="Li Z."/>
            <person name="Liu B."/>
            <person name="Liu J."/>
            <person name="Liu W."/>
            <person name="Lu J."/>
            <person name="Maheshwari M."/>
            <person name="Nguyen B.-V."/>
            <person name="Okwuonu G.O."/>
            <person name="Palmeiri A."/>
            <person name="Pasternak S."/>
            <person name="Perez L.M."/>
            <person name="Phelps K.A."/>
            <person name="Plopper F.J."/>
            <person name="Qiang B."/>
            <person name="Raymond C."/>
            <person name="Rodriguez R."/>
            <person name="Saenphimmachak C."/>
            <person name="Santibanez J."/>
            <person name="Shen H."/>
            <person name="Shen Y."/>
            <person name="Subramanian S."/>
            <person name="Tabor P.E."/>
            <person name="Verduzco D."/>
            <person name="Waldron L."/>
            <person name="Wang J."/>
            <person name="Wang J."/>
            <person name="Wang Q."/>
            <person name="Williams G.A."/>
            <person name="Wong G.K.-S."/>
            <person name="Yao Z."/>
            <person name="Zhang J."/>
            <person name="Zhang X."/>
            <person name="Zhao G."/>
            <person name="Zhou J."/>
            <person name="Zhou Y."/>
            <person name="Nelson D."/>
            <person name="Lehrach H."/>
            <person name="Reinhardt R."/>
            <person name="Naylor S.L."/>
            <person name="Yang H."/>
            <person name="Olson M."/>
            <person name="Weinstock G."/>
            <person name="Gibbs R.A."/>
        </authorList>
    </citation>
    <scope>NUCLEOTIDE SEQUENCE [LARGE SCALE GENOMIC DNA]</scope>
</reference>
<reference key="8">
    <citation type="submission" date="2005-09" db="EMBL/GenBank/DDBJ databases">
        <authorList>
            <person name="Mural R.J."/>
            <person name="Istrail S."/>
            <person name="Sutton G.G."/>
            <person name="Florea L."/>
            <person name="Halpern A.L."/>
            <person name="Mobarry C.M."/>
            <person name="Lippert R."/>
            <person name="Walenz B."/>
            <person name="Shatkay H."/>
            <person name="Dew I."/>
            <person name="Miller J.R."/>
            <person name="Flanigan M.J."/>
            <person name="Edwards N.J."/>
            <person name="Bolanos R."/>
            <person name="Fasulo D."/>
            <person name="Halldorsson B.V."/>
            <person name="Hannenhalli S."/>
            <person name="Turner R."/>
            <person name="Yooseph S."/>
            <person name="Lu F."/>
            <person name="Nusskern D.R."/>
            <person name="Shue B.C."/>
            <person name="Zheng X.H."/>
            <person name="Zhong F."/>
            <person name="Delcher A.L."/>
            <person name="Huson D.H."/>
            <person name="Kravitz S.A."/>
            <person name="Mouchard L."/>
            <person name="Reinert K."/>
            <person name="Remington K.A."/>
            <person name="Clark A.G."/>
            <person name="Waterman M.S."/>
            <person name="Eichler E.E."/>
            <person name="Adams M.D."/>
            <person name="Hunkapiller M.W."/>
            <person name="Myers E.W."/>
            <person name="Venter J.C."/>
        </authorList>
    </citation>
    <scope>NUCLEOTIDE SEQUENCE [LARGE SCALE GENOMIC DNA]</scope>
    <scope>VARIANT MET-179</scope>
</reference>
<reference key="9">
    <citation type="journal article" date="2004" name="Genome Res.">
        <title>The status, quality, and expansion of the NIH full-length cDNA project: the Mammalian Gene Collection (MGC).</title>
        <authorList>
            <consortium name="The MGC Project Team"/>
        </authorList>
    </citation>
    <scope>NUCLEOTIDE SEQUENCE [LARGE SCALE MRNA] (ISOFORM 1)</scope>
    <scope>VARIANT MET-179</scope>
    <source>
        <tissue>Brain</tissue>
        <tissue>Placenta</tissue>
    </source>
</reference>
<reference key="10">
    <citation type="submission" date="1999-08" db="EMBL/GenBank/DDBJ databases">
        <title>Molecular cloning of a probable G protein-coupled receptor with three transmembrane domains.</title>
        <authorList>
            <person name="Zhang W."/>
            <person name="Wan T."/>
            <person name="Cao X."/>
        </authorList>
    </citation>
    <scope>NUCLEOTIDE SEQUENCE [MRNA] OF 172-354</scope>
    <scope>VARIANT MET-179</scope>
</reference>
<keyword id="KW-0025">Alternative splicing</keyword>
<keyword id="KW-1003">Cell membrane</keyword>
<keyword id="KW-1015">Disulfide bond</keyword>
<keyword id="KW-0297">G-protein coupled receptor</keyword>
<keyword id="KW-0325">Glycoprotein</keyword>
<keyword id="KW-0472">Membrane</keyword>
<keyword id="KW-1267">Proteomics identification</keyword>
<keyword id="KW-0675">Receptor</keyword>
<keyword id="KW-1185">Reference proteome</keyword>
<keyword id="KW-0807">Transducer</keyword>
<keyword id="KW-0812">Transmembrane</keyword>
<keyword id="KW-1133">Transmembrane helix</keyword>
<comment type="function">
    <text evidence="5">Receptor for ADP. Coupled to G(i)-proteins. May play a role in hematopoiesis and the immune system.</text>
</comment>
<comment type="interaction">
    <interactant intactId="EBI-17459480">
        <id>Q9BPV8</id>
    </interactant>
    <interactant intactId="EBI-17458373">
        <id>P48165</id>
        <label>GJA8</label>
    </interactant>
    <organismsDiffer>false</organismsDiffer>
    <experiments>3</experiments>
</comment>
<comment type="subcellular location">
    <subcellularLocation>
        <location>Cell membrane</location>
        <topology>Multi-pass membrane protein</topology>
    </subcellularLocation>
</comment>
<comment type="alternative products">
    <event type="alternative splicing"/>
    <isoform>
        <id>Q9BPV8-1</id>
        <name>1</name>
        <sequence type="displayed"/>
    </isoform>
    <isoform>
        <id>Q9BPV8-2</id>
        <name>2</name>
        <sequence type="described" ref="VSP_036226"/>
    </isoform>
</comment>
<comment type="tissue specificity">
    <text>Strong expression in spleen and adult brain. Lower expression in placenta, lung, liver, spinal cord, thymus, small intestine, uterus, stomach, testis, fetal brain, and adrenal gland. Not detected in pancreas, heart, kidney, skeletal muscle, ovary or fetal aorta. Clearly detected in lymph node and bone marrow, weakly detected in peripheral blood mononuclear cells (PBMC) and in peripheral blood leukocytes (PBL), but not detected in polymorphonuclear cells (PMN). In the brain, detected in all brain regions examined.</text>
</comment>
<comment type="miscellaneous">
    <text>Stimulation by ADP in stably transfected CHO cells resulted in inhibition of adenylyl cyclase and the phosphorylation of the MAP kinases MAPK3 and MAPK1 in a pertussis toxin-sensitive way. Inhibition of adenylyl cyclase and phosphorylation of the MAP kinases are transduction mechanisms that involve G(i) proteins.</text>
</comment>
<comment type="similarity">
    <text evidence="2">Belongs to the G-protein coupled receptor 1 family.</text>
</comment>
<comment type="sequence caution" evidence="15">
    <conflict type="miscellaneous discrepancy">
        <sequence resource="EMBL-CDS" id="AAH29363"/>
    </conflict>
    <text>Contaminating sequence. Potential poly-A sequence.</text>
</comment>
<comment type="sequence caution" evidence="15">
    <conflict type="erroneous initiation">
        <sequence resource="EMBL-CDS" id="AAH41116"/>
    </conflict>
    <text>Truncated N-terminus.</text>
</comment>
<comment type="sequence caution" evidence="15">
    <conflict type="erroneous initiation">
        <sequence resource="EMBL-CDS" id="BAG36024"/>
    </conflict>
    <text>Truncated N-terminus.</text>
</comment>
<evidence type="ECO:0000255" key="1"/>
<evidence type="ECO:0000255" key="2">
    <source>
        <dbReference type="PROSITE-ProRule" id="PRU00521"/>
    </source>
</evidence>
<evidence type="ECO:0000256" key="3">
    <source>
        <dbReference type="SAM" id="MobiDB-lite"/>
    </source>
</evidence>
<evidence type="ECO:0000269" key="4">
    <source>
    </source>
</evidence>
<evidence type="ECO:0000269" key="5">
    <source>
    </source>
</evidence>
<evidence type="ECO:0000269" key="6">
    <source>
    </source>
</evidence>
<evidence type="ECO:0000269" key="7">
    <source>
    </source>
</evidence>
<evidence type="ECO:0000269" key="8">
    <source>
    </source>
</evidence>
<evidence type="ECO:0000269" key="9">
    <source ref="10"/>
</evidence>
<evidence type="ECO:0000269" key="10">
    <source ref="4"/>
</evidence>
<evidence type="ECO:0000269" key="11">
    <source ref="8"/>
</evidence>
<evidence type="ECO:0000303" key="12">
    <source>
    </source>
</evidence>
<evidence type="ECO:0000303" key="13">
    <source>
    </source>
</evidence>
<evidence type="ECO:0000303" key="14">
    <source ref="4"/>
</evidence>
<evidence type="ECO:0000305" key="15"/>
<organism>
    <name type="scientific">Homo sapiens</name>
    <name type="common">Human</name>
    <dbReference type="NCBI Taxonomy" id="9606"/>
    <lineage>
        <taxon>Eukaryota</taxon>
        <taxon>Metazoa</taxon>
        <taxon>Chordata</taxon>
        <taxon>Craniata</taxon>
        <taxon>Vertebrata</taxon>
        <taxon>Euteleostomi</taxon>
        <taxon>Mammalia</taxon>
        <taxon>Eutheria</taxon>
        <taxon>Euarchontoglires</taxon>
        <taxon>Primates</taxon>
        <taxon>Haplorrhini</taxon>
        <taxon>Catarrhini</taxon>
        <taxon>Hominidae</taxon>
        <taxon>Homo</taxon>
    </lineage>
</organism>
<protein>
    <recommendedName>
        <fullName>P2Y purinoceptor 13</fullName>
        <shortName>P2Y13</shortName>
    </recommendedName>
    <alternativeName>
        <fullName>G-protein coupled receptor 86</fullName>
    </alternativeName>
    <alternativeName>
        <fullName>G-protein coupled receptor 94</fullName>
    </alternativeName>
</protein>